<gene>
    <name type="primary">CYP11A1</name>
</gene>
<reference key="1">
    <citation type="journal article" date="1984" name="Proc. Natl. Acad. Sci. U.S.A.">
        <title>Molecular cloning and nucleotide sequence of cDNA for mRNA of mitochondrial cytochrome P-450(SCC) of bovine adrenal cortex.</title>
        <authorList>
            <person name="Morohashi K."/>
            <person name="Fujii-Kuriyama Y."/>
            <person name="Okada Y."/>
            <person name="Sogawa K."/>
            <person name="Hirose T."/>
            <person name="Inayama S."/>
            <person name="Omura T."/>
        </authorList>
    </citation>
    <scope>NUCLEOTIDE SEQUENCE [MRNA]</scope>
    <source>
        <tissue>Adrenal cortex</tissue>
    </source>
</reference>
<reference key="2">
    <citation type="journal article" date="1986" name="Biochim. Biophys. Acta">
        <title>Primary structure of the cholesterol side-chain cleavage cytochrome P-450 from bovine adrenocortical mitochondria and some aspects of its functioning on a structural level.</title>
        <authorList>
            <person name="Chashchin V.L."/>
            <person name="Lapko V.N."/>
            <person name="Adamovich T.B."/>
            <person name="Lapko A.G."/>
            <person name="Kuprina N.S."/>
            <person name="Akhrem A.A."/>
        </authorList>
    </citation>
    <scope>PROTEIN SEQUENCE OF 40-520</scope>
</reference>
<reference key="3">
    <citation type="journal article" date="1983" name="J. Biochem.">
        <title>Partial amino acid sequences of two mitochondrial and two microsomal cytochrome P-450's from adrenal cortex.</title>
        <authorList>
            <person name="Ogishima T."/>
            <person name="Okada Y."/>
            <person name="Kominami S."/>
            <person name="Takemori S."/>
            <person name="Omura T."/>
        </authorList>
    </citation>
    <scope>PROTEIN SEQUENCE OF 40-54</scope>
</reference>
<reference key="4">
    <citation type="journal article" date="1990" name="J. Biol. Chem.">
        <title>Characterization of the promoter/regulatory region of the bovine CYP11A (P-450scc) gene. Basal and cAMP-dependent expression.</title>
        <authorList>
            <person name="Ahlgren R."/>
            <person name="Simpson E.R."/>
            <person name="Waterman M.R."/>
            <person name="Lund J."/>
        </authorList>
    </citation>
    <scope>NUCLEOTIDE SEQUENCE [GENOMIC DNA] OF 1-90</scope>
</reference>
<reference key="5">
    <citation type="journal article" date="1986" name="Eur. J. Biochem.">
        <title>Stoichiometry of mitochondrial cytochromes P-450, adrenodoxin and adrenodoxin reductase in adrenal cortex and corpus luteum. Implications for membrane organization and gene regulation.</title>
        <authorList>
            <person name="Hanukoglu I."/>
            <person name="Hanukoglu Z."/>
        </authorList>
    </citation>
    <scope>TISSUE SPECIFICITY</scope>
</reference>
<reference key="6">
    <citation type="journal article" date="1992" name="Biochim. Biophys. Acta">
        <title>Molecular modeling of the 3-D structure of cytochrome P-450scc.</title>
        <authorList>
            <person name="Vijayakumar S."/>
            <person name="Salerno J.C."/>
        </authorList>
    </citation>
    <scope>3D-STRUCTURE MODELING OF 40-520</scope>
</reference>
<reference key="7">
    <citation type="journal article" date="2001" name="Biochemistry">
        <title>Putative helix F contributes to regioselectivity of hydroxylation in mitochondrial cytochrome P450 27A1.</title>
        <authorList>
            <person name="Pikuleva I.A."/>
            <person name="Puchkaev A."/>
            <person name="Bjoerkhem I."/>
        </authorList>
    </citation>
    <scope>FUNCTION</scope>
    <scope>CATALYTIC ACTIVITY</scope>
    <scope>MUTAGENESIS OF PHE-233</scope>
    <scope>PATHWAY</scope>
</reference>
<reference key="8">
    <citation type="journal article" date="2011" name="J. Biol. Chem.">
        <title>Structural basis for three-step sequential catalysis by the cholesterol side chain cleavage enzyme CYP11A1.</title>
        <authorList>
            <person name="Mast N."/>
            <person name="Annalora A.J."/>
            <person name="Lodowski D.T."/>
            <person name="Palczewski K."/>
            <person name="Stout C.D."/>
            <person name="Pikuleva I.A."/>
        </authorList>
    </citation>
    <scope>X-RAY CRYSTALLOGRAPHY (2.5 ANGSTROMS) OF 41-520 IN COMPLEX WITH HEME AND 22R-HYDROXYCHOLESTEROL</scope>
    <scope>COFACTOR</scope>
</reference>
<accession>P00189</accession>
<accession>Q28152</accession>
<proteinExistence type="evidence at protein level"/>
<dbReference type="EC" id="1.14.15.6" evidence="3"/>
<dbReference type="EMBL" id="K02130">
    <property type="protein sequence ID" value="AAA30488.1"/>
    <property type="molecule type" value="mRNA"/>
</dbReference>
<dbReference type="EMBL" id="J05245">
    <property type="protein sequence ID" value="AAA30681.1"/>
    <property type="molecule type" value="Genomic_DNA"/>
</dbReference>
<dbReference type="PIR" id="A00189">
    <property type="entry name" value="O4BOM"/>
</dbReference>
<dbReference type="RefSeq" id="NP_788817.1">
    <property type="nucleotide sequence ID" value="NM_176644.2"/>
</dbReference>
<dbReference type="PDB" id="3MZS">
    <property type="method" value="X-ray"/>
    <property type="resolution" value="2.50 A"/>
    <property type="chains" value="A/B/C/D=41-520"/>
</dbReference>
<dbReference type="PDBsum" id="3MZS"/>
<dbReference type="SMR" id="P00189"/>
<dbReference type="CORUM" id="P00189"/>
<dbReference type="FunCoup" id="P00189">
    <property type="interactions" value="36"/>
</dbReference>
<dbReference type="STRING" id="9913.ENSBTAP00000009106"/>
<dbReference type="BindingDB" id="P00189"/>
<dbReference type="ChEMBL" id="CHEMBL4813"/>
<dbReference type="DrugCentral" id="P00189"/>
<dbReference type="PaxDb" id="9913-ENSBTAP00000009106"/>
<dbReference type="GeneID" id="338048"/>
<dbReference type="KEGG" id="bta:338048"/>
<dbReference type="CTD" id="1583"/>
<dbReference type="eggNOG" id="KOG0159">
    <property type="taxonomic scope" value="Eukaryota"/>
</dbReference>
<dbReference type="InParanoid" id="P00189"/>
<dbReference type="OrthoDB" id="3945418at2759"/>
<dbReference type="BRENDA" id="1.14.15.6">
    <property type="organism ID" value="908"/>
</dbReference>
<dbReference type="SABIO-RK" id="P00189"/>
<dbReference type="UniPathway" id="UPA00229"/>
<dbReference type="UniPathway" id="UPA00296"/>
<dbReference type="EvolutionaryTrace" id="P00189"/>
<dbReference type="PRO" id="PR:P00189"/>
<dbReference type="Proteomes" id="UP000009136">
    <property type="component" value="Unplaced"/>
</dbReference>
<dbReference type="GO" id="GO:0005743">
    <property type="term" value="C:mitochondrial inner membrane"/>
    <property type="evidence" value="ECO:0000250"/>
    <property type="project" value="UniProtKB"/>
</dbReference>
<dbReference type="GO" id="GO:0005739">
    <property type="term" value="C:mitochondrion"/>
    <property type="evidence" value="ECO:0000314"/>
    <property type="project" value="UniProtKB"/>
</dbReference>
<dbReference type="GO" id="GO:0008386">
    <property type="term" value="F:cholesterol monooxygenase (side-chain-cleaving) activity"/>
    <property type="evidence" value="ECO:0000314"/>
    <property type="project" value="UniProtKB"/>
</dbReference>
<dbReference type="GO" id="GO:0020037">
    <property type="term" value="F:heme binding"/>
    <property type="evidence" value="ECO:0000250"/>
    <property type="project" value="UniProtKB"/>
</dbReference>
<dbReference type="GO" id="GO:0005506">
    <property type="term" value="F:iron ion binding"/>
    <property type="evidence" value="ECO:0007669"/>
    <property type="project" value="InterPro"/>
</dbReference>
<dbReference type="GO" id="GO:0006700">
    <property type="term" value="P:C21-steroid hormone biosynthetic process"/>
    <property type="evidence" value="ECO:0000314"/>
    <property type="project" value="UniProtKB"/>
</dbReference>
<dbReference type="GO" id="GO:0071375">
    <property type="term" value="P:cellular response to peptide hormone stimulus"/>
    <property type="evidence" value="ECO:0000318"/>
    <property type="project" value="GO_Central"/>
</dbReference>
<dbReference type="GO" id="GO:0008203">
    <property type="term" value="P:cholesterol metabolic process"/>
    <property type="evidence" value="ECO:0000314"/>
    <property type="project" value="UniProtKB"/>
</dbReference>
<dbReference type="GO" id="GO:0034650">
    <property type="term" value="P:cortisol metabolic process"/>
    <property type="evidence" value="ECO:0000318"/>
    <property type="project" value="GO_Central"/>
</dbReference>
<dbReference type="GO" id="GO:0006704">
    <property type="term" value="P:glucocorticoid biosynthetic process"/>
    <property type="evidence" value="ECO:0000318"/>
    <property type="project" value="GO_Central"/>
</dbReference>
<dbReference type="GO" id="GO:0042359">
    <property type="term" value="P:vitamin D metabolic process"/>
    <property type="evidence" value="ECO:0000314"/>
    <property type="project" value="UniProtKB"/>
</dbReference>
<dbReference type="CDD" id="cd20643">
    <property type="entry name" value="CYP11A1"/>
    <property type="match status" value="1"/>
</dbReference>
<dbReference type="FunFam" id="1.10.630.10:FF:000015">
    <property type="entry name" value="Cholesterol side-chain cleavage enzyme, mitochondrial"/>
    <property type="match status" value="1"/>
</dbReference>
<dbReference type="Gene3D" id="1.10.630.10">
    <property type="entry name" value="Cytochrome P450"/>
    <property type="match status" value="1"/>
</dbReference>
<dbReference type="InterPro" id="IPR050479">
    <property type="entry name" value="CYP11_CYP27_families"/>
</dbReference>
<dbReference type="InterPro" id="IPR001128">
    <property type="entry name" value="Cyt_P450"/>
</dbReference>
<dbReference type="InterPro" id="IPR017972">
    <property type="entry name" value="Cyt_P450_CS"/>
</dbReference>
<dbReference type="InterPro" id="IPR002401">
    <property type="entry name" value="Cyt_P450_E_grp-I"/>
</dbReference>
<dbReference type="InterPro" id="IPR036396">
    <property type="entry name" value="Cyt_P450_sf"/>
</dbReference>
<dbReference type="PANTHER" id="PTHR24279:SF3">
    <property type="entry name" value="CHOLESTEROL SIDE-CHAIN CLEAVAGE ENZYME, MITOCHONDRIAL"/>
    <property type="match status" value="1"/>
</dbReference>
<dbReference type="PANTHER" id="PTHR24279">
    <property type="entry name" value="CYTOCHROME P450"/>
    <property type="match status" value="1"/>
</dbReference>
<dbReference type="Pfam" id="PF00067">
    <property type="entry name" value="p450"/>
    <property type="match status" value="1"/>
</dbReference>
<dbReference type="PRINTS" id="PR00463">
    <property type="entry name" value="EP450I"/>
</dbReference>
<dbReference type="PRINTS" id="PR00385">
    <property type="entry name" value="P450"/>
</dbReference>
<dbReference type="SUPFAM" id="SSF48264">
    <property type="entry name" value="Cytochrome P450"/>
    <property type="match status" value="1"/>
</dbReference>
<dbReference type="PROSITE" id="PS00086">
    <property type="entry name" value="CYTOCHROME_P450"/>
    <property type="match status" value="1"/>
</dbReference>
<organism>
    <name type="scientific">Bos taurus</name>
    <name type="common">Bovine</name>
    <dbReference type="NCBI Taxonomy" id="9913"/>
    <lineage>
        <taxon>Eukaryota</taxon>
        <taxon>Metazoa</taxon>
        <taxon>Chordata</taxon>
        <taxon>Craniata</taxon>
        <taxon>Vertebrata</taxon>
        <taxon>Euteleostomi</taxon>
        <taxon>Mammalia</taxon>
        <taxon>Eutheria</taxon>
        <taxon>Laurasiatheria</taxon>
        <taxon>Artiodactyla</taxon>
        <taxon>Ruminantia</taxon>
        <taxon>Pecora</taxon>
        <taxon>Bovidae</taxon>
        <taxon>Bovinae</taxon>
        <taxon>Bos</taxon>
    </lineage>
</organism>
<comment type="function">
    <text evidence="3">A cytochrome P450 monooxygenase that catalyzes the side-chain hydroxylation and cleavage of cholesterol to pregnenolone, the precursor of most steroid hormones (PubMed:11412116). Catalyzes three sequential oxidation reactions of cholesterol, namely the hydroxylation at C22 followed with the hydroxylation at C20 to yield 20R,22R-hydroxycholesterol that is further cleaved between C20 and C22 to yield the C21-steroid pregnenolone and 4-methylpentanal (PubMed:11412116). Mechanistically, uses molecular oxygen inserting one oxygen atom into a substrate and reducing the second into a water molecule. Two electrons are provided by NADPH via a two-protein mitochondrial transfer system comprising flavoprotein FDXR (adrenodoxin/ferredoxin reductase) and nonheme iron-sulfur protein FDX1 or FDX2 (adrenodoxin/ferredoxin) (PubMed:11412116).</text>
</comment>
<comment type="catalytic activity">
    <reaction evidence="3">
        <text>6 reduced [adrenodoxin] + cholesterol + 3 O2 + 6 H(+) = 4-methylpentanal + pregnenolone + 6 oxidized [adrenodoxin] + 4 H2O</text>
        <dbReference type="Rhea" id="RHEA:35739"/>
        <dbReference type="Rhea" id="RHEA-COMP:9998"/>
        <dbReference type="Rhea" id="RHEA-COMP:9999"/>
        <dbReference type="ChEBI" id="CHEBI:15377"/>
        <dbReference type="ChEBI" id="CHEBI:15378"/>
        <dbReference type="ChEBI" id="CHEBI:15379"/>
        <dbReference type="ChEBI" id="CHEBI:16113"/>
        <dbReference type="ChEBI" id="CHEBI:16581"/>
        <dbReference type="ChEBI" id="CHEBI:17998"/>
        <dbReference type="ChEBI" id="CHEBI:33737"/>
        <dbReference type="ChEBI" id="CHEBI:33738"/>
        <dbReference type="EC" id="1.14.15.6"/>
    </reaction>
    <physiologicalReaction direction="left-to-right" evidence="10">
        <dbReference type="Rhea" id="RHEA:35740"/>
    </physiologicalReaction>
</comment>
<comment type="catalytic activity">
    <reaction evidence="3">
        <text>2 reduced [adrenodoxin] + cholesterol + O2 + 2 H(+) = (22R)-hydroxycholesterol + 2 oxidized [adrenodoxin] + H2O</text>
        <dbReference type="Rhea" id="RHEA:34335"/>
        <dbReference type="Rhea" id="RHEA-COMP:9998"/>
        <dbReference type="Rhea" id="RHEA-COMP:9999"/>
        <dbReference type="ChEBI" id="CHEBI:15377"/>
        <dbReference type="ChEBI" id="CHEBI:15378"/>
        <dbReference type="ChEBI" id="CHEBI:15379"/>
        <dbReference type="ChEBI" id="CHEBI:16113"/>
        <dbReference type="ChEBI" id="CHEBI:33737"/>
        <dbReference type="ChEBI" id="CHEBI:33738"/>
        <dbReference type="ChEBI" id="CHEBI:67237"/>
    </reaction>
    <physiologicalReaction direction="left-to-right" evidence="10">
        <dbReference type="Rhea" id="RHEA:34336"/>
    </physiologicalReaction>
</comment>
<comment type="catalytic activity">
    <reaction evidence="3">
        <text>(22R)-hydroxycholesterol + 2 reduced [adrenodoxin] + O2 + 2 H(+) = (20R,22R)-20,22-dihydroxycholesterol + 2 oxidized [adrenodoxin] + H2O</text>
        <dbReference type="Rhea" id="RHEA:34339"/>
        <dbReference type="Rhea" id="RHEA-COMP:9998"/>
        <dbReference type="Rhea" id="RHEA-COMP:9999"/>
        <dbReference type="ChEBI" id="CHEBI:1294"/>
        <dbReference type="ChEBI" id="CHEBI:15377"/>
        <dbReference type="ChEBI" id="CHEBI:15378"/>
        <dbReference type="ChEBI" id="CHEBI:15379"/>
        <dbReference type="ChEBI" id="CHEBI:33737"/>
        <dbReference type="ChEBI" id="CHEBI:33738"/>
        <dbReference type="ChEBI" id="CHEBI:67237"/>
    </reaction>
    <physiologicalReaction direction="left-to-right" evidence="10">
        <dbReference type="Rhea" id="RHEA:34340"/>
    </physiologicalReaction>
</comment>
<comment type="catalytic activity">
    <reaction evidence="3">
        <text>(20R,22R)-20,22-dihydroxycholesterol + 2 reduced [adrenodoxin] + O2 + 2 H(+) = 4-methylpentanal + pregnenolone + 2 oxidized [adrenodoxin] + 2 H2O</text>
        <dbReference type="Rhea" id="RHEA:34343"/>
        <dbReference type="Rhea" id="RHEA-COMP:9998"/>
        <dbReference type="Rhea" id="RHEA-COMP:9999"/>
        <dbReference type="ChEBI" id="CHEBI:1294"/>
        <dbReference type="ChEBI" id="CHEBI:15377"/>
        <dbReference type="ChEBI" id="CHEBI:15378"/>
        <dbReference type="ChEBI" id="CHEBI:15379"/>
        <dbReference type="ChEBI" id="CHEBI:16581"/>
        <dbReference type="ChEBI" id="CHEBI:17998"/>
        <dbReference type="ChEBI" id="CHEBI:33737"/>
        <dbReference type="ChEBI" id="CHEBI:33738"/>
    </reaction>
    <physiologicalReaction direction="left-to-right" evidence="10">
        <dbReference type="Rhea" id="RHEA:34344"/>
    </physiologicalReaction>
</comment>
<comment type="cofactor">
    <cofactor evidence="4">
        <name>heme</name>
        <dbReference type="ChEBI" id="CHEBI:30413"/>
    </cofactor>
</comment>
<comment type="pathway">
    <text evidence="3">Lipid metabolism; C21-steroid hormone metabolism.</text>
</comment>
<comment type="pathway">
    <text evidence="3">Steroid metabolism; cholesterol metabolism.</text>
</comment>
<comment type="subunit">
    <text evidence="1">Interacts with FDX1/adrenodoxin.</text>
</comment>
<comment type="subcellular location">
    <subcellularLocation>
        <location evidence="2">Mitochondrion inner membrane</location>
        <topology evidence="9">Peripheral membrane protein</topology>
    </subcellularLocation>
    <text evidence="2">Localizes to the matrix side of the mitochondrion inner membrane.</text>
</comment>
<comment type="tissue specificity">
    <text evidence="5">Detected in adrenal cortex and corpus luteum (at protein level).</text>
</comment>
<comment type="similarity">
    <text evidence="9">Belongs to the cytochrome P450 family.</text>
</comment>
<protein>
    <recommendedName>
        <fullName evidence="8">Cholesterol side-chain cleavage enzyme, mitochondrial</fullName>
        <ecNumber evidence="3">1.14.15.6</ecNumber>
    </recommendedName>
    <alternativeName>
        <fullName>CYPXIA1</fullName>
    </alternativeName>
    <alternativeName>
        <fullName>Cholesterol desmolase</fullName>
    </alternativeName>
    <alternativeName>
        <fullName>Cytochrome P450 11A1</fullName>
    </alternativeName>
    <alternativeName>
        <fullName>Cytochrome P450(scc)</fullName>
    </alternativeName>
</protein>
<name>CP11A_BOVIN</name>
<evidence type="ECO:0000250" key="1">
    <source>
        <dbReference type="UniProtKB" id="P05108"/>
    </source>
</evidence>
<evidence type="ECO:0000250" key="2">
    <source>
        <dbReference type="UniProtKB" id="P14137"/>
    </source>
</evidence>
<evidence type="ECO:0000269" key="3">
    <source>
    </source>
</evidence>
<evidence type="ECO:0000269" key="4">
    <source>
    </source>
</evidence>
<evidence type="ECO:0000269" key="5">
    <source>
    </source>
</evidence>
<evidence type="ECO:0000269" key="6">
    <source>
    </source>
</evidence>
<evidence type="ECO:0000269" key="7">
    <source>
    </source>
</evidence>
<evidence type="ECO:0000303" key="8">
    <source>
    </source>
</evidence>
<evidence type="ECO:0000305" key="9"/>
<evidence type="ECO:0000305" key="10">
    <source>
    </source>
</evidence>
<evidence type="ECO:0007744" key="11">
    <source>
        <dbReference type="PDB" id="3MZS"/>
    </source>
</evidence>
<evidence type="ECO:0007829" key="12">
    <source>
        <dbReference type="PDB" id="3MZS"/>
    </source>
</evidence>
<keyword id="KW-0002">3D-structure</keyword>
<keyword id="KW-0153">Cholesterol metabolism</keyword>
<keyword id="KW-0903">Direct protein sequencing</keyword>
<keyword id="KW-0349">Heme</keyword>
<keyword id="KW-0408">Iron</keyword>
<keyword id="KW-0443">Lipid metabolism</keyword>
<keyword id="KW-0472">Membrane</keyword>
<keyword id="KW-0479">Metal-binding</keyword>
<keyword id="KW-0496">Mitochondrion</keyword>
<keyword id="KW-0999">Mitochondrion inner membrane</keyword>
<keyword id="KW-0503">Monooxygenase</keyword>
<keyword id="KW-0560">Oxidoreductase</keyword>
<keyword id="KW-1185">Reference proteome</keyword>
<keyword id="KW-0753">Steroid metabolism</keyword>
<keyword id="KW-0755">Steroidogenesis</keyword>
<keyword id="KW-1207">Sterol metabolism</keyword>
<keyword id="KW-0809">Transit peptide</keyword>
<sequence length="520" mass="60333">MLARGLPLRSALVKACPPILSTVGEGWGHHRVGTGEGAGISTKTPRPYSEIPSPGDNGWLNLYHFWREKGSQRIHFRHIENFQKYGPIYREKLGNLESVYIIHPEDVAHLFKFEGSYPERYDIPPWLAYHRYYQKPIGVLFKKSGTWKKDRVVLNTEVMAPEAIKNFIPLLNPVSQDFVSLLHKRIKQQGSGKFVGDIKEDLFHFAFESITNVMFGERLGMLEETVNPEAQKFIDAVYKMFHTSVPLLNVPPELYRLFRTKTWRDHVAAWDTIFNKAEKYTEIFYQDLRRKTEFRNYPGILYCLLKSEKMLLEDVKANITEMLAGGVNTTSMTLQWHLYEMARSLNVQEMLREEVLNARRQAEGDISKMLQMVPLLKASIKETLRLHPISVTLQRYPESDLVLQDYLIPAKTLVQVAIYAMGRDPAFFSSPDKFDPTRWLSKDKDLIHFRNLGFGWGVRQCVGRRIAELEMTLFLIHILENFKVEMQHIGDVDTIFNLILTPDKPIFLVFRPFNQDPPQA</sequence>
<feature type="transit peptide" description="Mitochondrion" evidence="6 7">
    <location>
        <begin position="1"/>
        <end position="39"/>
    </location>
</feature>
<feature type="chain" id="PRO_0000003582" description="Cholesterol side-chain cleavage enzyme, mitochondrial">
    <location>
        <begin position="40"/>
        <end position="520"/>
    </location>
</feature>
<feature type="binding site" description="axial binding residue" evidence="4 11">
    <location>
        <position position="461"/>
    </location>
    <ligand>
        <name>heme</name>
        <dbReference type="ChEBI" id="CHEBI:30413"/>
    </ligand>
    <ligandPart>
        <name>Fe</name>
        <dbReference type="ChEBI" id="CHEBI:18248"/>
    </ligandPart>
</feature>
<feature type="mutagenesis site" description="Impairs the hydroxylase activity toward cholesterol; increases the electron leakage from the electron transfer chain." evidence="3">
    <original>F</original>
    <variation>A</variation>
    <location>
        <position position="233"/>
    </location>
</feature>
<feature type="mutagenesis site" description="Markedly reduces the hydroxylase activity toward cholesterol." evidence="3">
    <original>F</original>
    <variation>K</variation>
    <location>
        <position position="233"/>
    </location>
</feature>
<feature type="sequence conflict" description="In Ref. 4; AAA30681." evidence="9" ref="4">
    <original>T</original>
    <variation>S</variation>
    <location>
        <position position="22"/>
    </location>
</feature>
<feature type="sequence conflict" description="In Ref. 2; AA sequence." evidence="9" ref="2">
    <original>N</original>
    <variation>D</variation>
    <location>
        <position position="57"/>
    </location>
</feature>
<feature type="sequence conflict" description="In Ref. 2; AA sequence." evidence="9" ref="2">
    <original>D</original>
    <variation>N</variation>
    <location>
        <position position="106"/>
    </location>
</feature>
<feature type="sequence conflict" description="In Ref. 2; AA sequence." evidence="9" ref="2">
    <original>D</original>
    <variation>N</variation>
    <location>
        <position position="197"/>
    </location>
</feature>
<feature type="helix" evidence="12">
    <location>
        <begin position="48"/>
        <end position="50"/>
    </location>
</feature>
<feature type="helix" evidence="12">
    <location>
        <begin position="58"/>
        <end position="68"/>
    </location>
</feature>
<feature type="helix" evidence="12">
    <location>
        <begin position="70"/>
        <end position="72"/>
    </location>
</feature>
<feature type="helix" evidence="12">
    <location>
        <begin position="74"/>
        <end position="85"/>
    </location>
</feature>
<feature type="strand" evidence="12">
    <location>
        <begin position="87"/>
        <end position="90"/>
    </location>
</feature>
<feature type="strand" evidence="12">
    <location>
        <begin position="99"/>
        <end position="101"/>
    </location>
</feature>
<feature type="helix" evidence="12">
    <location>
        <begin position="104"/>
        <end position="112"/>
    </location>
</feature>
<feature type="helix" evidence="12">
    <location>
        <begin position="124"/>
        <end position="133"/>
    </location>
</feature>
<feature type="turn" evidence="12">
    <location>
        <begin position="139"/>
        <end position="141"/>
    </location>
</feature>
<feature type="helix" evidence="12">
    <location>
        <begin position="145"/>
        <end position="158"/>
    </location>
</feature>
<feature type="turn" evidence="12">
    <location>
        <begin position="161"/>
        <end position="167"/>
    </location>
</feature>
<feature type="helix" evidence="12">
    <location>
        <begin position="168"/>
        <end position="189"/>
    </location>
</feature>
<feature type="strand" evidence="12">
    <location>
        <begin position="190"/>
        <end position="192"/>
    </location>
</feature>
<feature type="strand" evidence="12">
    <location>
        <begin position="194"/>
        <end position="196"/>
    </location>
</feature>
<feature type="helix" evidence="12">
    <location>
        <begin position="199"/>
        <end position="215"/>
    </location>
</feature>
<feature type="strand" evidence="12">
    <location>
        <begin position="223"/>
        <end position="225"/>
    </location>
</feature>
<feature type="helix" evidence="12">
    <location>
        <begin position="229"/>
        <end position="242"/>
    </location>
</feature>
<feature type="helix" evidence="12">
    <location>
        <begin position="243"/>
        <end position="247"/>
    </location>
</feature>
<feature type="helix" evidence="12">
    <location>
        <begin position="252"/>
        <end position="254"/>
    </location>
</feature>
<feature type="helix" evidence="12">
    <location>
        <begin position="255"/>
        <end position="258"/>
    </location>
</feature>
<feature type="helix" evidence="12">
    <location>
        <begin position="260"/>
        <end position="289"/>
    </location>
</feature>
<feature type="helix" evidence="12">
    <location>
        <begin position="300"/>
        <end position="306"/>
    </location>
</feature>
<feature type="helix" evidence="12">
    <location>
        <begin position="312"/>
        <end position="343"/>
    </location>
</feature>
<feature type="helix" evidence="12">
    <location>
        <begin position="345"/>
        <end position="355"/>
    </location>
</feature>
<feature type="turn" evidence="12">
    <location>
        <begin position="356"/>
        <end position="362"/>
    </location>
</feature>
<feature type="helix" evidence="12">
    <location>
        <begin position="366"/>
        <end position="369"/>
    </location>
</feature>
<feature type="helix" evidence="12">
    <location>
        <begin position="374"/>
        <end position="386"/>
    </location>
</feature>
<feature type="strand" evidence="12">
    <location>
        <begin position="389"/>
        <end position="391"/>
    </location>
</feature>
<feature type="strand" evidence="12">
    <location>
        <begin position="393"/>
        <end position="395"/>
    </location>
</feature>
<feature type="strand" evidence="12">
    <location>
        <begin position="401"/>
        <end position="408"/>
    </location>
</feature>
<feature type="strand" evidence="12">
    <location>
        <begin position="414"/>
        <end position="416"/>
    </location>
</feature>
<feature type="helix" evidence="12">
    <location>
        <begin position="418"/>
        <end position="423"/>
    </location>
</feature>
<feature type="turn" evidence="12">
    <location>
        <begin position="425"/>
        <end position="427"/>
    </location>
</feature>
<feature type="strand" evidence="12">
    <location>
        <begin position="428"/>
        <end position="430"/>
    </location>
</feature>
<feature type="helix" evidence="12">
    <location>
        <begin position="436"/>
        <end position="440"/>
    </location>
</feature>
<feature type="strand" evidence="12">
    <location>
        <begin position="446"/>
        <end position="449"/>
    </location>
</feature>
<feature type="helix" evidence="12">
    <location>
        <begin position="457"/>
        <end position="459"/>
    </location>
</feature>
<feature type="helix" evidence="12">
    <location>
        <begin position="464"/>
        <end position="479"/>
    </location>
</feature>
<feature type="strand" evidence="12">
    <location>
        <begin position="485"/>
        <end position="488"/>
    </location>
</feature>
<feature type="strand" evidence="12">
    <location>
        <begin position="494"/>
        <end position="504"/>
    </location>
</feature>
<feature type="strand" evidence="12">
    <location>
        <begin position="508"/>
        <end position="510"/>
    </location>
</feature>